<dbReference type="EC" id="3.6.5.-" evidence="1"/>
<dbReference type="EMBL" id="CP001472">
    <property type="protein sequence ID" value="ACO34033.1"/>
    <property type="molecule type" value="Genomic_DNA"/>
</dbReference>
<dbReference type="RefSeq" id="WP_015897258.1">
    <property type="nucleotide sequence ID" value="NC_012483.1"/>
</dbReference>
<dbReference type="SMR" id="C1F9K2"/>
<dbReference type="FunCoup" id="C1F9K2">
    <property type="interactions" value="523"/>
</dbReference>
<dbReference type="STRING" id="240015.ACP_2159"/>
<dbReference type="KEGG" id="aca:ACP_2159"/>
<dbReference type="eggNOG" id="COG0536">
    <property type="taxonomic scope" value="Bacteria"/>
</dbReference>
<dbReference type="HOGENOM" id="CLU_011747_2_3_0"/>
<dbReference type="InParanoid" id="C1F9K2"/>
<dbReference type="OrthoDB" id="9807318at2"/>
<dbReference type="Proteomes" id="UP000002207">
    <property type="component" value="Chromosome"/>
</dbReference>
<dbReference type="GO" id="GO:0005737">
    <property type="term" value="C:cytoplasm"/>
    <property type="evidence" value="ECO:0007669"/>
    <property type="project" value="UniProtKB-SubCell"/>
</dbReference>
<dbReference type="GO" id="GO:0005525">
    <property type="term" value="F:GTP binding"/>
    <property type="evidence" value="ECO:0007669"/>
    <property type="project" value="UniProtKB-UniRule"/>
</dbReference>
<dbReference type="GO" id="GO:0003924">
    <property type="term" value="F:GTPase activity"/>
    <property type="evidence" value="ECO:0007669"/>
    <property type="project" value="UniProtKB-UniRule"/>
</dbReference>
<dbReference type="GO" id="GO:0000287">
    <property type="term" value="F:magnesium ion binding"/>
    <property type="evidence" value="ECO:0007669"/>
    <property type="project" value="InterPro"/>
</dbReference>
<dbReference type="GO" id="GO:0042254">
    <property type="term" value="P:ribosome biogenesis"/>
    <property type="evidence" value="ECO:0007669"/>
    <property type="project" value="UniProtKB-UniRule"/>
</dbReference>
<dbReference type="CDD" id="cd01898">
    <property type="entry name" value="Obg"/>
    <property type="match status" value="1"/>
</dbReference>
<dbReference type="FunFam" id="2.70.210.12:FF:000001">
    <property type="entry name" value="GTPase Obg"/>
    <property type="match status" value="1"/>
</dbReference>
<dbReference type="Gene3D" id="2.70.210.12">
    <property type="entry name" value="GTP1/OBG domain"/>
    <property type="match status" value="1"/>
</dbReference>
<dbReference type="Gene3D" id="3.40.50.300">
    <property type="entry name" value="P-loop containing nucleotide triphosphate hydrolases"/>
    <property type="match status" value="1"/>
</dbReference>
<dbReference type="HAMAP" id="MF_01454">
    <property type="entry name" value="GTPase_Obg"/>
    <property type="match status" value="1"/>
</dbReference>
<dbReference type="InterPro" id="IPR031167">
    <property type="entry name" value="G_OBG"/>
</dbReference>
<dbReference type="InterPro" id="IPR006073">
    <property type="entry name" value="GTP-bd"/>
</dbReference>
<dbReference type="InterPro" id="IPR014100">
    <property type="entry name" value="GTP-bd_Obg/CgtA"/>
</dbReference>
<dbReference type="InterPro" id="IPR006074">
    <property type="entry name" value="GTP1-OBG_CS"/>
</dbReference>
<dbReference type="InterPro" id="IPR006169">
    <property type="entry name" value="GTP1_OBG_dom"/>
</dbReference>
<dbReference type="InterPro" id="IPR036726">
    <property type="entry name" value="GTP1_OBG_dom_sf"/>
</dbReference>
<dbReference type="InterPro" id="IPR045086">
    <property type="entry name" value="OBG_GTPase"/>
</dbReference>
<dbReference type="InterPro" id="IPR027417">
    <property type="entry name" value="P-loop_NTPase"/>
</dbReference>
<dbReference type="InterPro" id="IPR005225">
    <property type="entry name" value="Small_GTP-bd"/>
</dbReference>
<dbReference type="NCBIfam" id="TIGR02729">
    <property type="entry name" value="Obg_CgtA"/>
    <property type="match status" value="1"/>
</dbReference>
<dbReference type="NCBIfam" id="NF008954">
    <property type="entry name" value="PRK12296.1"/>
    <property type="match status" value="1"/>
</dbReference>
<dbReference type="NCBIfam" id="NF008955">
    <property type="entry name" value="PRK12297.1"/>
    <property type="match status" value="1"/>
</dbReference>
<dbReference type="NCBIfam" id="NF008956">
    <property type="entry name" value="PRK12299.1"/>
    <property type="match status" value="1"/>
</dbReference>
<dbReference type="NCBIfam" id="TIGR00231">
    <property type="entry name" value="small_GTP"/>
    <property type="match status" value="1"/>
</dbReference>
<dbReference type="PANTHER" id="PTHR11702">
    <property type="entry name" value="DEVELOPMENTALLY REGULATED GTP-BINDING PROTEIN-RELATED"/>
    <property type="match status" value="1"/>
</dbReference>
<dbReference type="PANTHER" id="PTHR11702:SF31">
    <property type="entry name" value="MITOCHONDRIAL RIBOSOME-ASSOCIATED GTPASE 2"/>
    <property type="match status" value="1"/>
</dbReference>
<dbReference type="Pfam" id="PF01018">
    <property type="entry name" value="GTP1_OBG"/>
    <property type="match status" value="1"/>
</dbReference>
<dbReference type="Pfam" id="PF01926">
    <property type="entry name" value="MMR_HSR1"/>
    <property type="match status" value="1"/>
</dbReference>
<dbReference type="PIRSF" id="PIRSF002401">
    <property type="entry name" value="GTP_bd_Obg/CgtA"/>
    <property type="match status" value="1"/>
</dbReference>
<dbReference type="PRINTS" id="PR00326">
    <property type="entry name" value="GTP1OBG"/>
</dbReference>
<dbReference type="SUPFAM" id="SSF82051">
    <property type="entry name" value="Obg GTP-binding protein N-terminal domain"/>
    <property type="match status" value="1"/>
</dbReference>
<dbReference type="SUPFAM" id="SSF52540">
    <property type="entry name" value="P-loop containing nucleoside triphosphate hydrolases"/>
    <property type="match status" value="1"/>
</dbReference>
<dbReference type="PROSITE" id="PS51710">
    <property type="entry name" value="G_OBG"/>
    <property type="match status" value="1"/>
</dbReference>
<dbReference type="PROSITE" id="PS00905">
    <property type="entry name" value="GTP1_OBG"/>
    <property type="match status" value="1"/>
</dbReference>
<dbReference type="PROSITE" id="PS51883">
    <property type="entry name" value="OBG"/>
    <property type="match status" value="1"/>
</dbReference>
<sequence>MFIDEAKIRVKAGDGGNGCMAFRREKFVPRGGPSGGDGGRGGDIVMESTQRHNTLLYFRYNPEHKAERGEHGMGSNCTGRDGKDIILKVPVGTVVYNAESGELLHDFQQPDERLIVAHGGRGGRGNQHFATSTHQAPREHEMGYPGEEFTLRLELKVLADIGIVGYPNVGKSTLISRISAAKPKIADYPFTTLEPNLGVVTVGEMPHEETFVVADIPGLIEGAHEGAGLGDRFLRHVERTHLLVHLVDVSDASGRPDPVADYKTIAAELANFGGELEDKPVIVVASKIDSVNPDKLKKLAAMAKRRKLPFYEISAVTGQGVQQLKYAMAERVRELRKQTQIEL</sequence>
<comment type="function">
    <text evidence="1">An essential GTPase which binds GTP, GDP and possibly (p)ppGpp with moderate affinity, with high nucleotide exchange rates and a fairly low GTP hydrolysis rate. Plays a role in control of the cell cycle, stress response, ribosome biogenesis and in those bacteria that undergo differentiation, in morphogenesis control.</text>
</comment>
<comment type="cofactor">
    <cofactor evidence="1">
        <name>Mg(2+)</name>
        <dbReference type="ChEBI" id="CHEBI:18420"/>
    </cofactor>
</comment>
<comment type="subunit">
    <text evidence="1">Monomer.</text>
</comment>
<comment type="subcellular location">
    <subcellularLocation>
        <location evidence="1">Cytoplasm</location>
    </subcellularLocation>
</comment>
<comment type="similarity">
    <text evidence="1">Belongs to the TRAFAC class OBG-HflX-like GTPase superfamily. OBG GTPase family.</text>
</comment>
<accession>C1F9K2</accession>
<feature type="chain" id="PRO_0000385661" description="GTPase Obg">
    <location>
        <begin position="1"/>
        <end position="343"/>
    </location>
</feature>
<feature type="domain" description="Obg" evidence="2">
    <location>
        <begin position="1"/>
        <end position="158"/>
    </location>
</feature>
<feature type="domain" description="OBG-type G" evidence="1">
    <location>
        <begin position="159"/>
        <end position="333"/>
    </location>
</feature>
<feature type="region of interest" description="Disordered" evidence="3">
    <location>
        <begin position="121"/>
        <end position="140"/>
    </location>
</feature>
<feature type="binding site" evidence="1">
    <location>
        <begin position="165"/>
        <end position="172"/>
    </location>
    <ligand>
        <name>GTP</name>
        <dbReference type="ChEBI" id="CHEBI:37565"/>
    </ligand>
</feature>
<feature type="binding site" evidence="1">
    <location>
        <position position="172"/>
    </location>
    <ligand>
        <name>Mg(2+)</name>
        <dbReference type="ChEBI" id="CHEBI:18420"/>
    </ligand>
</feature>
<feature type="binding site" evidence="1">
    <location>
        <begin position="190"/>
        <end position="194"/>
    </location>
    <ligand>
        <name>GTP</name>
        <dbReference type="ChEBI" id="CHEBI:37565"/>
    </ligand>
</feature>
<feature type="binding site" evidence="1">
    <location>
        <position position="192"/>
    </location>
    <ligand>
        <name>Mg(2+)</name>
        <dbReference type="ChEBI" id="CHEBI:18420"/>
    </ligand>
</feature>
<feature type="binding site" evidence="1">
    <location>
        <begin position="215"/>
        <end position="218"/>
    </location>
    <ligand>
        <name>GTP</name>
        <dbReference type="ChEBI" id="CHEBI:37565"/>
    </ligand>
</feature>
<feature type="binding site" evidence="1">
    <location>
        <begin position="286"/>
        <end position="289"/>
    </location>
    <ligand>
        <name>GTP</name>
        <dbReference type="ChEBI" id="CHEBI:37565"/>
    </ligand>
</feature>
<feature type="binding site" evidence="1">
    <location>
        <begin position="314"/>
        <end position="316"/>
    </location>
    <ligand>
        <name>GTP</name>
        <dbReference type="ChEBI" id="CHEBI:37565"/>
    </ligand>
</feature>
<gene>
    <name evidence="1" type="primary">obg</name>
    <name type="ordered locus">ACP_2159</name>
</gene>
<name>OBG_ACIC5</name>
<protein>
    <recommendedName>
        <fullName evidence="1">GTPase Obg</fullName>
        <ecNumber evidence="1">3.6.5.-</ecNumber>
    </recommendedName>
    <alternativeName>
        <fullName evidence="1">GTP-binding protein Obg</fullName>
    </alternativeName>
</protein>
<keyword id="KW-0963">Cytoplasm</keyword>
<keyword id="KW-0342">GTP-binding</keyword>
<keyword id="KW-0378">Hydrolase</keyword>
<keyword id="KW-0460">Magnesium</keyword>
<keyword id="KW-0479">Metal-binding</keyword>
<keyword id="KW-0547">Nucleotide-binding</keyword>
<keyword id="KW-1185">Reference proteome</keyword>
<evidence type="ECO:0000255" key="1">
    <source>
        <dbReference type="HAMAP-Rule" id="MF_01454"/>
    </source>
</evidence>
<evidence type="ECO:0000255" key="2">
    <source>
        <dbReference type="PROSITE-ProRule" id="PRU01231"/>
    </source>
</evidence>
<evidence type="ECO:0000256" key="3">
    <source>
        <dbReference type="SAM" id="MobiDB-lite"/>
    </source>
</evidence>
<reference key="1">
    <citation type="journal article" date="2009" name="Appl. Environ. Microbiol.">
        <title>Three genomes from the phylum Acidobacteria provide insight into the lifestyles of these microorganisms in soils.</title>
        <authorList>
            <person name="Ward N.L."/>
            <person name="Challacombe J.F."/>
            <person name="Janssen P.H."/>
            <person name="Henrissat B."/>
            <person name="Coutinho P.M."/>
            <person name="Wu M."/>
            <person name="Xie G."/>
            <person name="Haft D.H."/>
            <person name="Sait M."/>
            <person name="Badger J."/>
            <person name="Barabote R.D."/>
            <person name="Bradley B."/>
            <person name="Brettin T.S."/>
            <person name="Brinkac L.M."/>
            <person name="Bruce D."/>
            <person name="Creasy T."/>
            <person name="Daugherty S.C."/>
            <person name="Davidsen T.M."/>
            <person name="DeBoy R.T."/>
            <person name="Detter J.C."/>
            <person name="Dodson R.J."/>
            <person name="Durkin A.S."/>
            <person name="Ganapathy A."/>
            <person name="Gwinn-Giglio M."/>
            <person name="Han C.S."/>
            <person name="Khouri H."/>
            <person name="Kiss H."/>
            <person name="Kothari S.P."/>
            <person name="Madupu R."/>
            <person name="Nelson K.E."/>
            <person name="Nelson W.C."/>
            <person name="Paulsen I."/>
            <person name="Penn K."/>
            <person name="Ren Q."/>
            <person name="Rosovitz M.J."/>
            <person name="Selengut J.D."/>
            <person name="Shrivastava S."/>
            <person name="Sullivan S.A."/>
            <person name="Tapia R."/>
            <person name="Thompson L.S."/>
            <person name="Watkins K.L."/>
            <person name="Yang Q."/>
            <person name="Yu C."/>
            <person name="Zafar N."/>
            <person name="Zhou L."/>
            <person name="Kuske C.R."/>
        </authorList>
    </citation>
    <scope>NUCLEOTIDE SEQUENCE [LARGE SCALE GENOMIC DNA]</scope>
    <source>
        <strain>ATCC 51196 / DSM 11244 / BCRC 80197 / JCM 7670 / NBRC 15755 / NCIMB 13165 / 161</strain>
    </source>
</reference>
<organism>
    <name type="scientific">Acidobacterium capsulatum (strain ATCC 51196 / DSM 11244 / BCRC 80197 / JCM 7670 / NBRC 15755 / NCIMB 13165 / 161)</name>
    <dbReference type="NCBI Taxonomy" id="240015"/>
    <lineage>
        <taxon>Bacteria</taxon>
        <taxon>Pseudomonadati</taxon>
        <taxon>Acidobacteriota</taxon>
        <taxon>Terriglobia</taxon>
        <taxon>Terriglobales</taxon>
        <taxon>Acidobacteriaceae</taxon>
        <taxon>Acidobacterium</taxon>
    </lineage>
</organism>
<proteinExistence type="inferred from homology"/>